<name>KAD1_CAEEL</name>
<protein>
    <recommendedName>
        <fullName evidence="1">Adenylate kinase isoenzyme 1</fullName>
        <shortName evidence="1">AK 1</shortName>
        <ecNumber evidence="1">2.7.4.3</ecNumber>
    </recommendedName>
    <alternativeName>
        <fullName evidence="1">ATP-AMP transphosphorylase 1</fullName>
    </alternativeName>
    <alternativeName>
        <fullName evidence="1">ATP:AMP phosphotransferase</fullName>
    </alternativeName>
    <alternativeName>
        <fullName evidence="1">Adenylate monophosphate kinase</fullName>
    </alternativeName>
</protein>
<organism>
    <name type="scientific">Caenorhabditis elegans</name>
    <dbReference type="NCBI Taxonomy" id="6239"/>
    <lineage>
        <taxon>Eukaryota</taxon>
        <taxon>Metazoa</taxon>
        <taxon>Ecdysozoa</taxon>
        <taxon>Nematoda</taxon>
        <taxon>Chromadorea</taxon>
        <taxon>Rhabditida</taxon>
        <taxon>Rhabditina</taxon>
        <taxon>Rhabditomorpha</taxon>
        <taxon>Rhabditoidea</taxon>
        <taxon>Rhabditidae</taxon>
        <taxon>Peloderinae</taxon>
        <taxon>Caenorhabditis</taxon>
    </lineage>
</organism>
<comment type="function">
    <text evidence="1">Catalyzes the reversible transfer of the terminal phosphate group between ATP and AMP. Plays an important role in cellular energy homeostasis and in adenine nucleotide metabolism.</text>
</comment>
<comment type="catalytic activity">
    <reaction evidence="1">
        <text>AMP + ATP = 2 ADP</text>
        <dbReference type="Rhea" id="RHEA:12973"/>
        <dbReference type="ChEBI" id="CHEBI:30616"/>
        <dbReference type="ChEBI" id="CHEBI:456215"/>
        <dbReference type="ChEBI" id="CHEBI:456216"/>
        <dbReference type="EC" id="2.7.4.3"/>
    </reaction>
</comment>
<comment type="subunit">
    <text evidence="1">Monomer.</text>
</comment>
<comment type="subcellular location">
    <subcellularLocation>
        <location evidence="1">Cytoplasm</location>
    </subcellularLocation>
</comment>
<comment type="domain">
    <text evidence="1">Consists of three domains, a large central CORE domain and two small peripheral domains, NMPbind and LID, which undergo movements during catalysis. The LID domain closes over the site of phosphoryl transfer upon ATP binding. Assembling and dissambling the active center during each catalytic cycle provides an effective means to prevent ATP hydrolysis.</text>
</comment>
<comment type="similarity">
    <text evidence="1">Belongs to the adenylate kinase family. AK1 subfamily.</text>
</comment>
<feature type="chain" id="PRO_0000158932" description="Adenylate kinase isoenzyme 1">
    <location>
        <begin position="1"/>
        <end position="210"/>
    </location>
</feature>
<feature type="region of interest" description="NMP" evidence="1">
    <location>
        <begin position="50"/>
        <end position="79"/>
    </location>
</feature>
<feature type="region of interest" description="LID" evidence="1">
    <location>
        <begin position="144"/>
        <end position="154"/>
    </location>
</feature>
<feature type="binding site" evidence="1">
    <location>
        <begin position="30"/>
        <end position="35"/>
    </location>
    <ligand>
        <name>ATP</name>
        <dbReference type="ChEBI" id="CHEBI:30616"/>
    </ligand>
</feature>
<feature type="binding site" evidence="1">
    <location>
        <position position="51"/>
    </location>
    <ligand>
        <name>AMP</name>
        <dbReference type="ChEBI" id="CHEBI:456215"/>
    </ligand>
</feature>
<feature type="binding site" evidence="1">
    <location>
        <position position="56"/>
    </location>
    <ligand>
        <name>AMP</name>
        <dbReference type="ChEBI" id="CHEBI:456215"/>
    </ligand>
</feature>
<feature type="binding site" evidence="1">
    <location>
        <begin position="77"/>
        <end position="79"/>
    </location>
    <ligand>
        <name>AMP</name>
        <dbReference type="ChEBI" id="CHEBI:456215"/>
    </ligand>
</feature>
<feature type="binding site" evidence="1">
    <location>
        <begin position="107"/>
        <end position="110"/>
    </location>
    <ligand>
        <name>AMP</name>
        <dbReference type="ChEBI" id="CHEBI:456215"/>
    </ligand>
</feature>
<feature type="binding site" evidence="1">
    <location>
        <position position="114"/>
    </location>
    <ligand>
        <name>AMP</name>
        <dbReference type="ChEBI" id="CHEBI:456215"/>
    </ligand>
</feature>
<feature type="binding site" evidence="1">
    <location>
        <position position="145"/>
    </location>
    <ligand>
        <name>ATP</name>
        <dbReference type="ChEBI" id="CHEBI:30616"/>
    </ligand>
</feature>
<feature type="binding site" evidence="1">
    <location>
        <position position="151"/>
    </location>
    <ligand>
        <name>AMP</name>
        <dbReference type="ChEBI" id="CHEBI:456215"/>
    </ligand>
</feature>
<feature type="binding site" evidence="1">
    <location>
        <position position="162"/>
    </location>
    <ligand>
        <name>AMP</name>
        <dbReference type="ChEBI" id="CHEBI:456215"/>
    </ligand>
</feature>
<feature type="binding site" evidence="1">
    <location>
        <position position="190"/>
    </location>
    <ligand>
        <name>ATP</name>
        <dbReference type="ChEBI" id="CHEBI:30616"/>
    </ligand>
</feature>
<dbReference type="EC" id="2.7.4.3" evidence="1"/>
<dbReference type="EMBL" id="Z50045">
    <property type="protein sequence ID" value="CAA90364.1"/>
    <property type="molecule type" value="Genomic_DNA"/>
</dbReference>
<dbReference type="EMBL" id="AF304123">
    <property type="protein sequence ID" value="AAG50236.1"/>
    <property type="molecule type" value="mRNA"/>
</dbReference>
<dbReference type="PIR" id="T21947">
    <property type="entry name" value="T21947"/>
</dbReference>
<dbReference type="RefSeq" id="NP_001257141.1">
    <property type="nucleotide sequence ID" value="NM_001270212.3"/>
</dbReference>
<dbReference type="SMR" id="Q20140"/>
<dbReference type="BioGRID" id="46227">
    <property type="interactions" value="20"/>
</dbReference>
<dbReference type="FunCoup" id="Q20140">
    <property type="interactions" value="412"/>
</dbReference>
<dbReference type="IntAct" id="Q20140">
    <property type="interactions" value="1"/>
</dbReference>
<dbReference type="STRING" id="6239.F38B2.4a.1"/>
<dbReference type="PaxDb" id="6239-F38B2.4a"/>
<dbReference type="PeptideAtlas" id="Q20140"/>
<dbReference type="EnsemblMetazoa" id="F38B2.4a.1">
    <property type="protein sequence ID" value="F38B2.4a.1"/>
    <property type="gene ID" value="WBGene00009531"/>
</dbReference>
<dbReference type="GeneID" id="181317"/>
<dbReference type="KEGG" id="cel:CELE_F38B2.4"/>
<dbReference type="UCSC" id="F38B2.4">
    <property type="organism name" value="c. elegans"/>
</dbReference>
<dbReference type="AGR" id="WB:WBGene00009531"/>
<dbReference type="CTD" id="181317"/>
<dbReference type="WormBase" id="F38B2.4a">
    <property type="protein sequence ID" value="CE02218"/>
    <property type="gene ID" value="WBGene00009531"/>
</dbReference>
<dbReference type="eggNOG" id="KOG3079">
    <property type="taxonomic scope" value="Eukaryota"/>
</dbReference>
<dbReference type="GeneTree" id="ENSGT00940000158325"/>
<dbReference type="HOGENOM" id="CLU_032354_0_3_1"/>
<dbReference type="InParanoid" id="Q20140"/>
<dbReference type="OMA" id="GTQCDRM"/>
<dbReference type="OrthoDB" id="442176at2759"/>
<dbReference type="PhylomeDB" id="Q20140"/>
<dbReference type="BRENDA" id="2.7.4.3">
    <property type="organism ID" value="1045"/>
</dbReference>
<dbReference type="Reactome" id="R-CEL-499943">
    <property type="pathway name" value="Interconversion of nucleotide di- and triphosphates"/>
</dbReference>
<dbReference type="PRO" id="PR:Q20140"/>
<dbReference type="Proteomes" id="UP000001940">
    <property type="component" value="Chromosome X"/>
</dbReference>
<dbReference type="Bgee" id="WBGene00009531">
    <property type="expression patterns" value="Expressed in larva and 3 other cell types or tissues"/>
</dbReference>
<dbReference type="GO" id="GO:0005737">
    <property type="term" value="C:cytoplasm"/>
    <property type="evidence" value="ECO:0000318"/>
    <property type="project" value="GO_Central"/>
</dbReference>
<dbReference type="GO" id="GO:0005829">
    <property type="term" value="C:cytosol"/>
    <property type="evidence" value="ECO:0000318"/>
    <property type="project" value="GO_Central"/>
</dbReference>
<dbReference type="GO" id="GO:0004017">
    <property type="term" value="F:adenylate kinase activity"/>
    <property type="evidence" value="ECO:0000318"/>
    <property type="project" value="GO_Central"/>
</dbReference>
<dbReference type="GO" id="GO:0005524">
    <property type="term" value="F:ATP binding"/>
    <property type="evidence" value="ECO:0007669"/>
    <property type="project" value="UniProtKB-KW"/>
</dbReference>
<dbReference type="GO" id="GO:0004550">
    <property type="term" value="F:nucleoside diphosphate kinase activity"/>
    <property type="evidence" value="ECO:0007669"/>
    <property type="project" value="InterPro"/>
</dbReference>
<dbReference type="GO" id="GO:0006172">
    <property type="term" value="P:ADP biosynthetic process"/>
    <property type="evidence" value="ECO:0007669"/>
    <property type="project" value="UniProtKB-UniRule"/>
</dbReference>
<dbReference type="GO" id="GO:0046033">
    <property type="term" value="P:AMP metabolic process"/>
    <property type="evidence" value="ECO:0007669"/>
    <property type="project" value="UniProtKB-UniRule"/>
</dbReference>
<dbReference type="GO" id="GO:0046034">
    <property type="term" value="P:ATP metabolic process"/>
    <property type="evidence" value="ECO:0007669"/>
    <property type="project" value="UniProtKB-UniRule"/>
</dbReference>
<dbReference type="GO" id="GO:0009142">
    <property type="term" value="P:nucleoside triphosphate biosynthetic process"/>
    <property type="evidence" value="ECO:0007669"/>
    <property type="project" value="InterPro"/>
</dbReference>
<dbReference type="CDD" id="cd01428">
    <property type="entry name" value="ADK"/>
    <property type="match status" value="1"/>
</dbReference>
<dbReference type="FunFam" id="3.40.50.300:FF:000315">
    <property type="entry name" value="Adenylate kinase 1"/>
    <property type="match status" value="1"/>
</dbReference>
<dbReference type="Gene3D" id="3.40.50.300">
    <property type="entry name" value="P-loop containing nucleotide triphosphate hydrolases"/>
    <property type="match status" value="1"/>
</dbReference>
<dbReference type="HAMAP" id="MF_00235">
    <property type="entry name" value="Adenylate_kinase_Adk"/>
    <property type="match status" value="1"/>
</dbReference>
<dbReference type="HAMAP" id="MF_03171">
    <property type="entry name" value="Adenylate_kinase_AK1"/>
    <property type="match status" value="1"/>
</dbReference>
<dbReference type="InterPro" id="IPR000850">
    <property type="entry name" value="Adenylat/UMP-CMP_kin"/>
</dbReference>
<dbReference type="InterPro" id="IPR033690">
    <property type="entry name" value="Adenylat_kinase_CS"/>
</dbReference>
<dbReference type="InterPro" id="IPR028582">
    <property type="entry name" value="AK1"/>
</dbReference>
<dbReference type="InterPro" id="IPR006267">
    <property type="entry name" value="AK1/5"/>
</dbReference>
<dbReference type="InterPro" id="IPR027417">
    <property type="entry name" value="P-loop_NTPase"/>
</dbReference>
<dbReference type="NCBIfam" id="TIGR01360">
    <property type="entry name" value="aden_kin_iso1"/>
    <property type="match status" value="1"/>
</dbReference>
<dbReference type="NCBIfam" id="NF011100">
    <property type="entry name" value="PRK14527.1"/>
    <property type="match status" value="1"/>
</dbReference>
<dbReference type="PANTHER" id="PTHR23359">
    <property type="entry name" value="NUCLEOTIDE KINASE"/>
    <property type="match status" value="1"/>
</dbReference>
<dbReference type="Pfam" id="PF00406">
    <property type="entry name" value="ADK"/>
    <property type="match status" value="1"/>
</dbReference>
<dbReference type="PRINTS" id="PR00094">
    <property type="entry name" value="ADENYLTKNASE"/>
</dbReference>
<dbReference type="SUPFAM" id="SSF52540">
    <property type="entry name" value="P-loop containing nucleoside triphosphate hydrolases"/>
    <property type="match status" value="1"/>
</dbReference>
<dbReference type="PROSITE" id="PS00113">
    <property type="entry name" value="ADENYLATE_KINASE"/>
    <property type="match status" value="1"/>
</dbReference>
<proteinExistence type="evidence at transcript level"/>
<keyword id="KW-0067">ATP-binding</keyword>
<keyword id="KW-0963">Cytoplasm</keyword>
<keyword id="KW-0418">Kinase</keyword>
<keyword id="KW-0547">Nucleotide-binding</keyword>
<keyword id="KW-1185">Reference proteome</keyword>
<keyword id="KW-0808">Transferase</keyword>
<evidence type="ECO:0000255" key="1">
    <source>
        <dbReference type="HAMAP-Rule" id="MF_03171"/>
    </source>
</evidence>
<gene>
    <name type="ORF">F38B2.4</name>
</gene>
<accession>Q20140</accession>
<reference key="1">
    <citation type="journal article" date="1998" name="Science">
        <title>Genome sequence of the nematode C. elegans: a platform for investigating biology.</title>
        <authorList>
            <consortium name="The C. elegans sequencing consortium"/>
        </authorList>
    </citation>
    <scope>NUCLEOTIDE SEQUENCE [LARGE SCALE GENOMIC DNA]</scope>
    <source>
        <strain>Bristol N2</strain>
    </source>
</reference>
<reference key="2">
    <citation type="submission" date="2000-09" db="EMBL/GenBank/DDBJ databases">
        <title>The Caenorhabditis elegans transcriptome project, a complementary view of the genome.</title>
        <authorList>
            <person name="Kohara Y."/>
            <person name="Shin-i T."/>
            <person name="Suzuki Y."/>
            <person name="Sugano S."/>
            <person name="Potdevin M."/>
            <person name="Thierry-Mieg Y."/>
            <person name="Thierry-Mieg D."/>
            <person name="Thierry-Mieg J."/>
        </authorList>
    </citation>
    <scope>NUCLEOTIDE SEQUENCE [LARGE SCALE MRNA]</scope>
    <source>
        <strain>Bristol N2</strain>
    </source>
</reference>
<sequence length="210" mass="22597">MAPTVERKNINLAPLKAAGVPIFFIVGGPGSGKGTQCDKIVAKYGLTHLSSGDLLRDEVKSGSPRGAQLTAIMESGALVPLEVVLDLVKEAMLKAIEKGSKGFLIDGYPREVAQGQQFESEIQEAKLVLFFDVAEETLVKRLLHRAQTSGRADDNADTIKKRLHTFVTSTAPVVDYYESKGKLVRINAEGSVDDIFAVVVANLDKATSKL</sequence>